<keyword id="KW-0165">Cleavage on pair of basic residues</keyword>
<keyword id="KW-1015">Disulfide bond</keyword>
<keyword id="KW-0964">Secreted</keyword>
<keyword id="KW-0732">Signal</keyword>
<keyword id="KW-0838">Vasoactive</keyword>
<keyword id="KW-0839">Vasoconstrictor</keyword>
<protein>
    <recommendedName>
        <fullName>Endothelin-2</fullName>
        <shortName>ET-2</shortName>
    </recommendedName>
    <alternativeName>
        <fullName>Preproendothelin-2</fullName>
        <shortName>PPET2</shortName>
    </alternativeName>
</protein>
<name>EDN2_ATEAB</name>
<feature type="signal peptide" evidence="2">
    <location>
        <begin position="1"/>
        <end position="26"/>
    </location>
</feature>
<feature type="propeptide" id="PRO_0000008078" evidence="1">
    <location>
        <begin position="27"/>
        <end position="47"/>
    </location>
</feature>
<feature type="peptide" id="PRO_0000008079" description="Endothelin-2">
    <location>
        <begin position="50"/>
        <end position="70"/>
    </location>
</feature>
<feature type="propeptide" id="PRO_0000008080" evidence="1">
    <location>
        <begin position="71"/>
        <end position="180"/>
    </location>
</feature>
<feature type="region of interest" description="Endothelin-like">
    <location>
        <begin position="97"/>
        <end position="112"/>
    </location>
</feature>
<feature type="region of interest" description="Disordered" evidence="3">
    <location>
        <begin position="157"/>
        <end position="180"/>
    </location>
</feature>
<feature type="site" description="Cleavage; by KEL" evidence="1">
    <location>
        <begin position="70"/>
        <end position="71"/>
    </location>
</feature>
<feature type="disulfide bond" evidence="1">
    <location>
        <begin position="50"/>
        <end position="64"/>
    </location>
</feature>
<feature type="disulfide bond" evidence="1">
    <location>
        <begin position="52"/>
        <end position="60"/>
    </location>
</feature>
<evidence type="ECO:0000250" key="1"/>
<evidence type="ECO:0000255" key="2"/>
<evidence type="ECO:0000256" key="3">
    <source>
        <dbReference type="SAM" id="MobiDB-lite"/>
    </source>
</evidence>
<evidence type="ECO:0000305" key="4"/>
<gene>
    <name type="primary">EDN2</name>
</gene>
<accession>Q5NRP8</accession>
<organism>
    <name type="scientific">Atelerix albiventris</name>
    <name type="common">Middle-African hedgehog</name>
    <name type="synonym">Four-toed hedgehog</name>
    <dbReference type="NCBI Taxonomy" id="9368"/>
    <lineage>
        <taxon>Eukaryota</taxon>
        <taxon>Metazoa</taxon>
        <taxon>Chordata</taxon>
        <taxon>Craniata</taxon>
        <taxon>Vertebrata</taxon>
        <taxon>Euteleostomi</taxon>
        <taxon>Mammalia</taxon>
        <taxon>Eutheria</taxon>
        <taxon>Laurasiatheria</taxon>
        <taxon>Eulipotyphla</taxon>
        <taxon>Erinaceidae</taxon>
        <taxon>Erinaceinae</taxon>
        <taxon>Atelerix</taxon>
    </lineage>
</organism>
<dbReference type="EMBL" id="AB197701">
    <property type="protein sequence ID" value="BAD83373.1"/>
    <property type="molecule type" value="mRNA"/>
</dbReference>
<dbReference type="GO" id="GO:0005615">
    <property type="term" value="C:extracellular space"/>
    <property type="evidence" value="ECO:0007669"/>
    <property type="project" value="TreeGrafter"/>
</dbReference>
<dbReference type="GO" id="GO:0031708">
    <property type="term" value="F:endothelin B receptor binding"/>
    <property type="evidence" value="ECO:0007669"/>
    <property type="project" value="TreeGrafter"/>
</dbReference>
<dbReference type="GO" id="GO:0005179">
    <property type="term" value="F:hormone activity"/>
    <property type="evidence" value="ECO:0007669"/>
    <property type="project" value="TreeGrafter"/>
</dbReference>
<dbReference type="GO" id="GO:0006874">
    <property type="term" value="P:intracellular calcium ion homeostasis"/>
    <property type="evidence" value="ECO:0007669"/>
    <property type="project" value="TreeGrafter"/>
</dbReference>
<dbReference type="GO" id="GO:0003100">
    <property type="term" value="P:regulation of systemic arterial blood pressure by endothelin"/>
    <property type="evidence" value="ECO:0007669"/>
    <property type="project" value="TreeGrafter"/>
</dbReference>
<dbReference type="GO" id="GO:0019229">
    <property type="term" value="P:regulation of vasoconstriction"/>
    <property type="evidence" value="ECO:0007669"/>
    <property type="project" value="InterPro"/>
</dbReference>
<dbReference type="GO" id="GO:0014826">
    <property type="term" value="P:vein smooth muscle contraction"/>
    <property type="evidence" value="ECO:0007669"/>
    <property type="project" value="TreeGrafter"/>
</dbReference>
<dbReference type="InterPro" id="IPR020475">
    <property type="entry name" value="Endothelin"/>
</dbReference>
<dbReference type="InterPro" id="IPR019764">
    <property type="entry name" value="Endothelin_toxin_CS"/>
</dbReference>
<dbReference type="InterPro" id="IPR001928">
    <property type="entry name" value="Endothln-like_toxin"/>
</dbReference>
<dbReference type="PANTHER" id="PTHR13874">
    <property type="entry name" value="ENDOTHELIN"/>
    <property type="match status" value="1"/>
</dbReference>
<dbReference type="PANTHER" id="PTHR13874:SF9">
    <property type="entry name" value="ENDOTHELIN-2"/>
    <property type="match status" value="1"/>
</dbReference>
<dbReference type="Pfam" id="PF00322">
    <property type="entry name" value="Endothelin"/>
    <property type="match status" value="1"/>
</dbReference>
<dbReference type="PRINTS" id="PR00365">
    <property type="entry name" value="ENDOTHELIN"/>
</dbReference>
<dbReference type="SMART" id="SM00272">
    <property type="entry name" value="END"/>
    <property type="match status" value="2"/>
</dbReference>
<dbReference type="PROSITE" id="PS00270">
    <property type="entry name" value="ENDOTHELIN"/>
    <property type="match status" value="2"/>
</dbReference>
<comment type="function">
    <text evidence="1">Endothelins are endothelium-derived vasoconstrictor peptides.</text>
</comment>
<comment type="subcellular location">
    <subcellularLocation>
        <location evidence="1">Secreted</location>
    </subcellularLocation>
</comment>
<comment type="similarity">
    <text evidence="4">Belongs to the endothelin/sarafotoxin family.</text>
</comment>
<proteinExistence type="evidence at transcript level"/>
<sequence>MVALPTAWCSVALALLVALHEGKSQSAATSEEPPAPSARARGSHLRLRRCSCNSWLDKECVYFCHLDIIWVNTPGQTAPYGLGNPPRRQRRSLPRRCECYSTRDSACVTFCHQKPWPKASAVPGEGSPTDLLWTSKTRTTAGELLRRLRDIFAAKRNFTRHQQQKATREPESSHSRWRKR</sequence>
<reference key="1">
    <citation type="submission" date="2004-12" db="EMBL/GenBank/DDBJ databases">
        <title>Cloning of hedgehog preproendothelin-2 cDNA.</title>
        <authorList>
            <person name="Uchide T."/>
        </authorList>
    </citation>
    <scope>NUCLEOTIDE SEQUENCE [MRNA]</scope>
</reference>